<keyword id="KW-0963">Cytoplasm</keyword>
<keyword id="KW-0444">Lipid biosynthesis</keyword>
<keyword id="KW-0443">Lipid metabolism</keyword>
<keyword id="KW-0479">Metal-binding</keyword>
<keyword id="KW-0520">NAD</keyword>
<keyword id="KW-0521">NADP</keyword>
<keyword id="KW-0560">Oxidoreductase</keyword>
<keyword id="KW-0594">Phospholipid biosynthesis</keyword>
<keyword id="KW-1208">Phospholipid metabolism</keyword>
<keyword id="KW-1185">Reference proteome</keyword>
<keyword id="KW-0862">Zinc</keyword>
<accession>A2BN26</accession>
<evidence type="ECO:0000255" key="1">
    <source>
        <dbReference type="HAMAP-Rule" id="MF_00497"/>
    </source>
</evidence>
<proteinExistence type="inferred from homology"/>
<sequence length="349" mass="37815">MLHRIELPQKIVVGSGAIDALREVLEEFAGRNSSIAVISGPNVWRLYGERFRSIVEGFVEYSFFEARNASVEYAEKLLEDVKAYSPSLVVGFGGGKSIDLAKYVAYRLGVRMISVPTSPSHDGIASPFTSLKGLDKPHSVRTVTPAAIIADIDIIASAPIRLIRAGAGDLIAKLTAIRDWRLAHKLKGEYYGEYAAKLALLSAKHVIEYASQIGRGVKEAVRVLVEGLVSSGVAMCIAGSTRPASGSEHLFAHALDLIAPGKALHGEEVALGTIMMMYLHGGDWRHVRRTIRRLGLPVTAKELGLSDEVIVKALTMAHRIRPERYTILGESGLTWEAAERLARVTGVIG</sequence>
<dbReference type="EC" id="1.1.1.261" evidence="1"/>
<dbReference type="EMBL" id="CP000493">
    <property type="protein sequence ID" value="ABM81387.1"/>
    <property type="molecule type" value="Genomic_DNA"/>
</dbReference>
<dbReference type="RefSeq" id="WP_011822705.1">
    <property type="nucleotide sequence ID" value="NC_008818.1"/>
</dbReference>
<dbReference type="SMR" id="A2BN26"/>
<dbReference type="STRING" id="415426.Hbut_1566"/>
<dbReference type="EnsemblBacteria" id="ABM81387">
    <property type="protein sequence ID" value="ABM81387"/>
    <property type="gene ID" value="Hbut_1566"/>
</dbReference>
<dbReference type="GeneID" id="4781507"/>
<dbReference type="KEGG" id="hbu:Hbut_1566"/>
<dbReference type="eggNOG" id="arCOG00982">
    <property type="taxonomic scope" value="Archaea"/>
</dbReference>
<dbReference type="HOGENOM" id="CLU_038362_0_0_2"/>
<dbReference type="OrthoDB" id="8656at2157"/>
<dbReference type="UniPathway" id="UPA00940"/>
<dbReference type="Proteomes" id="UP000002593">
    <property type="component" value="Chromosome"/>
</dbReference>
<dbReference type="GO" id="GO:0005737">
    <property type="term" value="C:cytoplasm"/>
    <property type="evidence" value="ECO:0007669"/>
    <property type="project" value="UniProtKB-SubCell"/>
</dbReference>
<dbReference type="GO" id="GO:0106357">
    <property type="term" value="F:glycerol-1-phosphate dehydrogenase (NAD+) activity"/>
    <property type="evidence" value="ECO:0007669"/>
    <property type="project" value="RHEA"/>
</dbReference>
<dbReference type="GO" id="GO:0106358">
    <property type="term" value="F:glycerol-1-phosphate dehydrogenase (NADP+) activity"/>
    <property type="evidence" value="ECO:0007669"/>
    <property type="project" value="RHEA"/>
</dbReference>
<dbReference type="GO" id="GO:0046872">
    <property type="term" value="F:metal ion binding"/>
    <property type="evidence" value="ECO:0007669"/>
    <property type="project" value="UniProtKB-KW"/>
</dbReference>
<dbReference type="GO" id="GO:0006650">
    <property type="term" value="P:glycerophospholipid metabolic process"/>
    <property type="evidence" value="ECO:0007669"/>
    <property type="project" value="UniProtKB-UniRule"/>
</dbReference>
<dbReference type="GO" id="GO:0008654">
    <property type="term" value="P:phospholipid biosynthetic process"/>
    <property type="evidence" value="ECO:0007669"/>
    <property type="project" value="UniProtKB-KW"/>
</dbReference>
<dbReference type="CDD" id="cd08173">
    <property type="entry name" value="Gro1PDH"/>
    <property type="match status" value="1"/>
</dbReference>
<dbReference type="Gene3D" id="3.40.50.1970">
    <property type="match status" value="1"/>
</dbReference>
<dbReference type="Gene3D" id="1.20.1090.10">
    <property type="entry name" value="Dehydroquinate synthase-like - alpha domain"/>
    <property type="match status" value="1"/>
</dbReference>
<dbReference type="HAMAP" id="MF_00497_A">
    <property type="entry name" value="G1P_dehydrogenase_A"/>
    <property type="match status" value="1"/>
</dbReference>
<dbReference type="InterPro" id="IPR023002">
    <property type="entry name" value="G1P_dehydrogenase_arc"/>
</dbReference>
<dbReference type="InterPro" id="IPR032837">
    <property type="entry name" value="G1PDH"/>
</dbReference>
<dbReference type="InterPro" id="IPR016205">
    <property type="entry name" value="Glycerol_DH"/>
</dbReference>
<dbReference type="NCBIfam" id="NF002022">
    <property type="entry name" value="PRK00843.1"/>
    <property type="match status" value="1"/>
</dbReference>
<dbReference type="PANTHER" id="PTHR43616">
    <property type="entry name" value="GLYCEROL DEHYDROGENASE"/>
    <property type="match status" value="1"/>
</dbReference>
<dbReference type="PANTHER" id="PTHR43616:SF5">
    <property type="entry name" value="GLYCEROL DEHYDROGENASE 1"/>
    <property type="match status" value="1"/>
</dbReference>
<dbReference type="Pfam" id="PF13685">
    <property type="entry name" value="Fe-ADH_2"/>
    <property type="match status" value="1"/>
</dbReference>
<dbReference type="PIRSF" id="PIRSF000112">
    <property type="entry name" value="Glycerol_dehydrogenase"/>
    <property type="match status" value="1"/>
</dbReference>
<dbReference type="SUPFAM" id="SSF56796">
    <property type="entry name" value="Dehydroquinate synthase-like"/>
    <property type="match status" value="1"/>
</dbReference>
<reference key="1">
    <citation type="journal article" date="2007" name="Archaea">
        <title>The genome of Hyperthermus butylicus: a sulfur-reducing, peptide fermenting, neutrophilic Crenarchaeote growing up to 108 degrees C.</title>
        <authorList>
            <person name="Bruegger K."/>
            <person name="Chen L."/>
            <person name="Stark M."/>
            <person name="Zibat A."/>
            <person name="Redder P."/>
            <person name="Ruepp A."/>
            <person name="Awayez M."/>
            <person name="She Q."/>
            <person name="Garrett R.A."/>
            <person name="Klenk H.-P."/>
        </authorList>
    </citation>
    <scope>NUCLEOTIDE SEQUENCE [LARGE SCALE GENOMIC DNA]</scope>
    <source>
        <strain>DSM 5456 / JCM 9403 / PLM1-5</strain>
    </source>
</reference>
<protein>
    <recommendedName>
        <fullName evidence="1">Glycerol-1-phosphate dehydrogenase [NAD(P)+]</fullName>
        <shortName evidence="1">G1P dehydrogenase</shortName>
        <shortName evidence="1">G1PDH</shortName>
        <ecNumber evidence="1">1.1.1.261</ecNumber>
    </recommendedName>
    <alternativeName>
        <fullName evidence="1">Enantiomeric glycerophosphate synthase</fullName>
    </alternativeName>
    <alternativeName>
        <fullName evidence="1">sn-glycerol-1-phosphate dehydrogenase</fullName>
    </alternativeName>
</protein>
<organism>
    <name type="scientific">Hyperthermus butylicus (strain DSM 5456 / JCM 9403 / PLM1-5)</name>
    <dbReference type="NCBI Taxonomy" id="415426"/>
    <lineage>
        <taxon>Archaea</taxon>
        <taxon>Thermoproteota</taxon>
        <taxon>Thermoprotei</taxon>
        <taxon>Desulfurococcales</taxon>
        <taxon>Pyrodictiaceae</taxon>
        <taxon>Hyperthermus</taxon>
    </lineage>
</organism>
<name>G1PDH_HYPBU</name>
<comment type="function">
    <text evidence="1">Catalyzes the NAD(P)H-dependent reduction of dihydroxyacetonephosphate (DHAP or glycerone phosphate) to glycerol 1-phosphate (G1P). The G1P thus generated is used as the glycerophosphate backbone of phospholipids in the cellular membranes of Archaea.</text>
</comment>
<comment type="catalytic activity">
    <reaction evidence="1">
        <text>sn-glycerol 1-phosphate + NAD(+) = dihydroxyacetone phosphate + NADH + H(+)</text>
        <dbReference type="Rhea" id="RHEA:21412"/>
        <dbReference type="ChEBI" id="CHEBI:15378"/>
        <dbReference type="ChEBI" id="CHEBI:57540"/>
        <dbReference type="ChEBI" id="CHEBI:57642"/>
        <dbReference type="ChEBI" id="CHEBI:57685"/>
        <dbReference type="ChEBI" id="CHEBI:57945"/>
        <dbReference type="EC" id="1.1.1.261"/>
    </reaction>
</comment>
<comment type="catalytic activity">
    <reaction evidence="1">
        <text>sn-glycerol 1-phosphate + NADP(+) = dihydroxyacetone phosphate + NADPH + H(+)</text>
        <dbReference type="Rhea" id="RHEA:21416"/>
        <dbReference type="ChEBI" id="CHEBI:15378"/>
        <dbReference type="ChEBI" id="CHEBI:57642"/>
        <dbReference type="ChEBI" id="CHEBI:57685"/>
        <dbReference type="ChEBI" id="CHEBI:57783"/>
        <dbReference type="ChEBI" id="CHEBI:58349"/>
        <dbReference type="EC" id="1.1.1.261"/>
    </reaction>
</comment>
<comment type="cofactor">
    <cofactor evidence="1">
        <name>Zn(2+)</name>
        <dbReference type="ChEBI" id="CHEBI:29105"/>
    </cofactor>
    <text evidence="1">Binds 1 zinc ion per subunit.</text>
</comment>
<comment type="pathway">
    <text evidence="1">Membrane lipid metabolism; glycerophospholipid metabolism.</text>
</comment>
<comment type="subunit">
    <text evidence="1">Homodimer.</text>
</comment>
<comment type="subcellular location">
    <subcellularLocation>
        <location evidence="1">Cytoplasm</location>
    </subcellularLocation>
</comment>
<comment type="similarity">
    <text evidence="1">Belongs to the glycerol-1-phosphate dehydrogenase family.</text>
</comment>
<feature type="chain" id="PRO_0000350645" description="Glycerol-1-phosphate dehydrogenase [NAD(P)+]">
    <location>
        <begin position="1"/>
        <end position="349"/>
    </location>
</feature>
<feature type="binding site" evidence="1">
    <location>
        <begin position="95"/>
        <end position="99"/>
    </location>
    <ligand>
        <name>NAD(+)</name>
        <dbReference type="ChEBI" id="CHEBI:57540"/>
    </ligand>
</feature>
<feature type="binding site" evidence="1">
    <location>
        <begin position="117"/>
        <end position="120"/>
    </location>
    <ligand>
        <name>NAD(+)</name>
        <dbReference type="ChEBI" id="CHEBI:57540"/>
    </ligand>
</feature>
<feature type="binding site" evidence="1">
    <location>
        <position position="122"/>
    </location>
    <ligand>
        <name>substrate</name>
    </ligand>
</feature>
<feature type="binding site" evidence="1">
    <location>
        <position position="126"/>
    </location>
    <ligand>
        <name>NAD(+)</name>
        <dbReference type="ChEBI" id="CHEBI:57540"/>
    </ligand>
</feature>
<feature type="binding site" evidence="1">
    <location>
        <position position="169"/>
    </location>
    <ligand>
        <name>substrate</name>
    </ligand>
</feature>
<feature type="binding site" evidence="1">
    <location>
        <position position="169"/>
    </location>
    <ligand>
        <name>Zn(2+)</name>
        <dbReference type="ChEBI" id="CHEBI:29105"/>
        <note>catalytic</note>
    </ligand>
</feature>
<feature type="binding site" evidence="1">
    <location>
        <position position="249"/>
    </location>
    <ligand>
        <name>Zn(2+)</name>
        <dbReference type="ChEBI" id="CHEBI:29105"/>
        <note>catalytic</note>
    </ligand>
</feature>
<feature type="binding site" evidence="1">
    <location>
        <position position="253"/>
    </location>
    <ligand>
        <name>substrate</name>
    </ligand>
</feature>
<feature type="binding site" evidence="1">
    <location>
        <position position="265"/>
    </location>
    <ligand>
        <name>Zn(2+)</name>
        <dbReference type="ChEBI" id="CHEBI:29105"/>
        <note>catalytic</note>
    </ligand>
</feature>
<gene>
    <name evidence="1" type="primary">egsA</name>
    <name type="ordered locus">Hbut_1566</name>
</gene>